<sequence length="220" mass="24713">MKGIFLVLEGIDGCGKSTQIEHLAQWLPLSGLMPSAAKLFITREPGGTRLGKSLRQLLLGTSPTDESPKPLTELLLYAADRAQHVSQVIQPKINNGDWVISDRFSSSTLAYQGFGRRLDKSLIKELENIATQGITPDLTFLLEIPVSESIKRRENTRKDRIESEGEIFLKRVSDGFSYIAKNDNWLVIPANQKKDIVSKQIENKLINYFQNISSLKNERS</sequence>
<name>KTHY_PROMA</name>
<dbReference type="EC" id="2.7.4.9" evidence="1"/>
<dbReference type="EMBL" id="AE017126">
    <property type="protein sequence ID" value="AAP99198.1"/>
    <property type="molecule type" value="Genomic_DNA"/>
</dbReference>
<dbReference type="RefSeq" id="NP_874546.1">
    <property type="nucleotide sequence ID" value="NC_005042.1"/>
</dbReference>
<dbReference type="RefSeq" id="WP_011124307.1">
    <property type="nucleotide sequence ID" value="NC_005042.1"/>
</dbReference>
<dbReference type="SMR" id="Q7VE61"/>
<dbReference type="STRING" id="167539.Pro_0152"/>
<dbReference type="EnsemblBacteria" id="AAP99198">
    <property type="protein sequence ID" value="AAP99198"/>
    <property type="gene ID" value="Pro_0152"/>
</dbReference>
<dbReference type="KEGG" id="pma:Pro_0152"/>
<dbReference type="PATRIC" id="fig|167539.5.peg.158"/>
<dbReference type="eggNOG" id="COG0125">
    <property type="taxonomic scope" value="Bacteria"/>
</dbReference>
<dbReference type="HOGENOM" id="CLU_049131_0_1_3"/>
<dbReference type="OrthoDB" id="9774907at2"/>
<dbReference type="Proteomes" id="UP000001420">
    <property type="component" value="Chromosome"/>
</dbReference>
<dbReference type="GO" id="GO:0005829">
    <property type="term" value="C:cytosol"/>
    <property type="evidence" value="ECO:0007669"/>
    <property type="project" value="TreeGrafter"/>
</dbReference>
<dbReference type="GO" id="GO:0005524">
    <property type="term" value="F:ATP binding"/>
    <property type="evidence" value="ECO:0007669"/>
    <property type="project" value="UniProtKB-UniRule"/>
</dbReference>
<dbReference type="GO" id="GO:0004798">
    <property type="term" value="F:dTMP kinase activity"/>
    <property type="evidence" value="ECO:0007669"/>
    <property type="project" value="UniProtKB-UniRule"/>
</dbReference>
<dbReference type="GO" id="GO:0006233">
    <property type="term" value="P:dTDP biosynthetic process"/>
    <property type="evidence" value="ECO:0007669"/>
    <property type="project" value="InterPro"/>
</dbReference>
<dbReference type="GO" id="GO:0006235">
    <property type="term" value="P:dTTP biosynthetic process"/>
    <property type="evidence" value="ECO:0007669"/>
    <property type="project" value="UniProtKB-UniRule"/>
</dbReference>
<dbReference type="GO" id="GO:0006227">
    <property type="term" value="P:dUDP biosynthetic process"/>
    <property type="evidence" value="ECO:0007669"/>
    <property type="project" value="TreeGrafter"/>
</dbReference>
<dbReference type="CDD" id="cd01672">
    <property type="entry name" value="TMPK"/>
    <property type="match status" value="1"/>
</dbReference>
<dbReference type="FunFam" id="3.40.50.300:FF:000225">
    <property type="entry name" value="Thymidylate kinase"/>
    <property type="match status" value="1"/>
</dbReference>
<dbReference type="Gene3D" id="3.40.50.300">
    <property type="entry name" value="P-loop containing nucleotide triphosphate hydrolases"/>
    <property type="match status" value="1"/>
</dbReference>
<dbReference type="HAMAP" id="MF_00165">
    <property type="entry name" value="Thymidylate_kinase"/>
    <property type="match status" value="1"/>
</dbReference>
<dbReference type="InterPro" id="IPR027417">
    <property type="entry name" value="P-loop_NTPase"/>
</dbReference>
<dbReference type="InterPro" id="IPR039430">
    <property type="entry name" value="Thymidylate_kin-like_dom"/>
</dbReference>
<dbReference type="InterPro" id="IPR018095">
    <property type="entry name" value="Thymidylate_kin_CS"/>
</dbReference>
<dbReference type="InterPro" id="IPR018094">
    <property type="entry name" value="Thymidylate_kinase"/>
</dbReference>
<dbReference type="NCBIfam" id="TIGR00041">
    <property type="entry name" value="DTMP_kinase"/>
    <property type="match status" value="1"/>
</dbReference>
<dbReference type="PANTHER" id="PTHR10344">
    <property type="entry name" value="THYMIDYLATE KINASE"/>
    <property type="match status" value="1"/>
</dbReference>
<dbReference type="PANTHER" id="PTHR10344:SF4">
    <property type="entry name" value="UMP-CMP KINASE 2, MITOCHONDRIAL"/>
    <property type="match status" value="1"/>
</dbReference>
<dbReference type="Pfam" id="PF02223">
    <property type="entry name" value="Thymidylate_kin"/>
    <property type="match status" value="1"/>
</dbReference>
<dbReference type="SUPFAM" id="SSF52540">
    <property type="entry name" value="P-loop containing nucleoside triphosphate hydrolases"/>
    <property type="match status" value="1"/>
</dbReference>
<dbReference type="PROSITE" id="PS01331">
    <property type="entry name" value="THYMIDYLATE_KINASE"/>
    <property type="match status" value="1"/>
</dbReference>
<gene>
    <name evidence="1" type="primary">tmk</name>
    <name type="ordered locus">Pro_0152</name>
</gene>
<accession>Q7VE61</accession>
<comment type="function">
    <text evidence="1">Phosphorylation of dTMP to form dTDP in both de novo and salvage pathways of dTTP synthesis.</text>
</comment>
<comment type="catalytic activity">
    <reaction evidence="1">
        <text>dTMP + ATP = dTDP + ADP</text>
        <dbReference type="Rhea" id="RHEA:13517"/>
        <dbReference type="ChEBI" id="CHEBI:30616"/>
        <dbReference type="ChEBI" id="CHEBI:58369"/>
        <dbReference type="ChEBI" id="CHEBI:63528"/>
        <dbReference type="ChEBI" id="CHEBI:456216"/>
        <dbReference type="EC" id="2.7.4.9"/>
    </reaction>
</comment>
<comment type="similarity">
    <text evidence="1">Belongs to the thymidylate kinase family.</text>
</comment>
<proteinExistence type="inferred from homology"/>
<evidence type="ECO:0000255" key="1">
    <source>
        <dbReference type="HAMAP-Rule" id="MF_00165"/>
    </source>
</evidence>
<protein>
    <recommendedName>
        <fullName evidence="1">Thymidylate kinase</fullName>
        <ecNumber evidence="1">2.7.4.9</ecNumber>
    </recommendedName>
    <alternativeName>
        <fullName evidence="1">dTMP kinase</fullName>
    </alternativeName>
</protein>
<reference key="1">
    <citation type="journal article" date="2003" name="Proc. Natl. Acad. Sci. U.S.A.">
        <title>Genome sequence of the cyanobacterium Prochlorococcus marinus SS120, a nearly minimal oxyphototrophic genome.</title>
        <authorList>
            <person name="Dufresne A."/>
            <person name="Salanoubat M."/>
            <person name="Partensky F."/>
            <person name="Artiguenave F."/>
            <person name="Axmann I.M."/>
            <person name="Barbe V."/>
            <person name="Duprat S."/>
            <person name="Galperin M.Y."/>
            <person name="Koonin E.V."/>
            <person name="Le Gall F."/>
            <person name="Makarova K.S."/>
            <person name="Ostrowski M."/>
            <person name="Oztas S."/>
            <person name="Robert C."/>
            <person name="Rogozin I.B."/>
            <person name="Scanlan D.J."/>
            <person name="Tandeau de Marsac N."/>
            <person name="Weissenbach J."/>
            <person name="Wincker P."/>
            <person name="Wolf Y.I."/>
            <person name="Hess W.R."/>
        </authorList>
    </citation>
    <scope>NUCLEOTIDE SEQUENCE [LARGE SCALE GENOMIC DNA]</scope>
    <source>
        <strain>SARG / CCMP1375 / SS120</strain>
    </source>
</reference>
<keyword id="KW-0067">ATP-binding</keyword>
<keyword id="KW-0418">Kinase</keyword>
<keyword id="KW-0545">Nucleotide biosynthesis</keyword>
<keyword id="KW-0547">Nucleotide-binding</keyword>
<keyword id="KW-1185">Reference proteome</keyword>
<keyword id="KW-0808">Transferase</keyword>
<organism>
    <name type="scientific">Prochlorococcus marinus (strain SARG / CCMP1375 / SS120)</name>
    <dbReference type="NCBI Taxonomy" id="167539"/>
    <lineage>
        <taxon>Bacteria</taxon>
        <taxon>Bacillati</taxon>
        <taxon>Cyanobacteriota</taxon>
        <taxon>Cyanophyceae</taxon>
        <taxon>Synechococcales</taxon>
        <taxon>Prochlorococcaceae</taxon>
        <taxon>Prochlorococcus</taxon>
    </lineage>
</organism>
<feature type="chain" id="PRO_0000155321" description="Thymidylate kinase">
    <location>
        <begin position="1"/>
        <end position="220"/>
    </location>
</feature>
<feature type="binding site" evidence="1">
    <location>
        <begin position="10"/>
        <end position="17"/>
    </location>
    <ligand>
        <name>ATP</name>
        <dbReference type="ChEBI" id="CHEBI:30616"/>
    </ligand>
</feature>